<name>GATA_THEFY</name>
<gene>
    <name evidence="1" type="primary">gatA</name>
    <name type="ordered locus">Tfu_0606</name>
</gene>
<comment type="function">
    <text evidence="1">Allows the formation of correctly charged Gln-tRNA(Gln) through the transamidation of misacylated Glu-tRNA(Gln) in organisms which lack glutaminyl-tRNA synthetase. The reaction takes place in the presence of glutamine and ATP through an activated gamma-phospho-Glu-tRNA(Gln).</text>
</comment>
<comment type="catalytic activity">
    <reaction evidence="1">
        <text>L-glutamyl-tRNA(Gln) + L-glutamine + ATP + H2O = L-glutaminyl-tRNA(Gln) + L-glutamate + ADP + phosphate + H(+)</text>
        <dbReference type="Rhea" id="RHEA:17521"/>
        <dbReference type="Rhea" id="RHEA-COMP:9681"/>
        <dbReference type="Rhea" id="RHEA-COMP:9684"/>
        <dbReference type="ChEBI" id="CHEBI:15377"/>
        <dbReference type="ChEBI" id="CHEBI:15378"/>
        <dbReference type="ChEBI" id="CHEBI:29985"/>
        <dbReference type="ChEBI" id="CHEBI:30616"/>
        <dbReference type="ChEBI" id="CHEBI:43474"/>
        <dbReference type="ChEBI" id="CHEBI:58359"/>
        <dbReference type="ChEBI" id="CHEBI:78520"/>
        <dbReference type="ChEBI" id="CHEBI:78521"/>
        <dbReference type="ChEBI" id="CHEBI:456216"/>
        <dbReference type="EC" id="6.3.5.7"/>
    </reaction>
</comment>
<comment type="subunit">
    <text evidence="1">Heterotrimer of A, B and C subunits.</text>
</comment>
<comment type="similarity">
    <text evidence="1">Belongs to the amidase family. GatA subfamily.</text>
</comment>
<protein>
    <recommendedName>
        <fullName evidence="1">Glutamyl-tRNA(Gln) amidotransferase subunit A</fullName>
        <shortName evidence="1">Glu-ADT subunit A</shortName>
        <ecNumber evidence="1">6.3.5.7</ecNumber>
    </recommendedName>
</protein>
<feature type="chain" id="PRO_0000241170" description="Glutamyl-tRNA(Gln) amidotransferase subunit A">
    <location>
        <begin position="1"/>
        <end position="498"/>
    </location>
</feature>
<feature type="region of interest" description="Disordered" evidence="2">
    <location>
        <begin position="132"/>
        <end position="159"/>
    </location>
</feature>
<feature type="active site" description="Charge relay system" evidence="1">
    <location>
        <position position="80"/>
    </location>
</feature>
<feature type="active site" description="Charge relay system" evidence="1">
    <location>
        <position position="155"/>
    </location>
</feature>
<feature type="active site" description="Acyl-ester intermediate" evidence="1">
    <location>
        <position position="179"/>
    </location>
</feature>
<dbReference type="EC" id="6.3.5.7" evidence="1"/>
<dbReference type="EMBL" id="CP000088">
    <property type="protein sequence ID" value="AAZ54644.1"/>
    <property type="molecule type" value="Genomic_DNA"/>
</dbReference>
<dbReference type="RefSeq" id="WP_011291053.1">
    <property type="nucleotide sequence ID" value="NC_007333.1"/>
</dbReference>
<dbReference type="SMR" id="Q47SC3"/>
<dbReference type="STRING" id="269800.Tfu_0606"/>
<dbReference type="KEGG" id="tfu:Tfu_0606"/>
<dbReference type="eggNOG" id="COG0154">
    <property type="taxonomic scope" value="Bacteria"/>
</dbReference>
<dbReference type="HOGENOM" id="CLU_009600_0_3_11"/>
<dbReference type="OrthoDB" id="182039at2"/>
<dbReference type="GO" id="GO:0030956">
    <property type="term" value="C:glutamyl-tRNA(Gln) amidotransferase complex"/>
    <property type="evidence" value="ECO:0007669"/>
    <property type="project" value="InterPro"/>
</dbReference>
<dbReference type="GO" id="GO:0005524">
    <property type="term" value="F:ATP binding"/>
    <property type="evidence" value="ECO:0007669"/>
    <property type="project" value="UniProtKB-KW"/>
</dbReference>
<dbReference type="GO" id="GO:0050567">
    <property type="term" value="F:glutaminyl-tRNA synthase (glutamine-hydrolyzing) activity"/>
    <property type="evidence" value="ECO:0007669"/>
    <property type="project" value="UniProtKB-UniRule"/>
</dbReference>
<dbReference type="GO" id="GO:0006412">
    <property type="term" value="P:translation"/>
    <property type="evidence" value="ECO:0007669"/>
    <property type="project" value="UniProtKB-UniRule"/>
</dbReference>
<dbReference type="Gene3D" id="3.90.1300.10">
    <property type="entry name" value="Amidase signature (AS) domain"/>
    <property type="match status" value="1"/>
</dbReference>
<dbReference type="HAMAP" id="MF_00120">
    <property type="entry name" value="GatA"/>
    <property type="match status" value="1"/>
</dbReference>
<dbReference type="InterPro" id="IPR000120">
    <property type="entry name" value="Amidase"/>
</dbReference>
<dbReference type="InterPro" id="IPR020556">
    <property type="entry name" value="Amidase_CS"/>
</dbReference>
<dbReference type="InterPro" id="IPR023631">
    <property type="entry name" value="Amidase_dom"/>
</dbReference>
<dbReference type="InterPro" id="IPR036928">
    <property type="entry name" value="AS_sf"/>
</dbReference>
<dbReference type="InterPro" id="IPR004412">
    <property type="entry name" value="GatA"/>
</dbReference>
<dbReference type="NCBIfam" id="TIGR00132">
    <property type="entry name" value="gatA"/>
    <property type="match status" value="1"/>
</dbReference>
<dbReference type="PANTHER" id="PTHR11895:SF151">
    <property type="entry name" value="GLUTAMYL-TRNA(GLN) AMIDOTRANSFERASE SUBUNIT A"/>
    <property type="match status" value="1"/>
</dbReference>
<dbReference type="PANTHER" id="PTHR11895">
    <property type="entry name" value="TRANSAMIDASE"/>
    <property type="match status" value="1"/>
</dbReference>
<dbReference type="Pfam" id="PF01425">
    <property type="entry name" value="Amidase"/>
    <property type="match status" value="1"/>
</dbReference>
<dbReference type="SUPFAM" id="SSF75304">
    <property type="entry name" value="Amidase signature (AS) enzymes"/>
    <property type="match status" value="1"/>
</dbReference>
<dbReference type="PROSITE" id="PS00571">
    <property type="entry name" value="AMIDASES"/>
    <property type="match status" value="1"/>
</dbReference>
<evidence type="ECO:0000255" key="1">
    <source>
        <dbReference type="HAMAP-Rule" id="MF_00120"/>
    </source>
</evidence>
<evidence type="ECO:0000256" key="2">
    <source>
        <dbReference type="SAM" id="MobiDB-lite"/>
    </source>
</evidence>
<accession>Q47SC3</accession>
<proteinExistence type="inferred from homology"/>
<keyword id="KW-0067">ATP-binding</keyword>
<keyword id="KW-0436">Ligase</keyword>
<keyword id="KW-0547">Nucleotide-binding</keyword>
<keyword id="KW-0648">Protein biosynthesis</keyword>
<organism>
    <name type="scientific">Thermobifida fusca (strain YX)</name>
    <dbReference type="NCBI Taxonomy" id="269800"/>
    <lineage>
        <taxon>Bacteria</taxon>
        <taxon>Bacillati</taxon>
        <taxon>Actinomycetota</taxon>
        <taxon>Actinomycetes</taxon>
        <taxon>Streptosporangiales</taxon>
        <taxon>Nocardiopsidaceae</taxon>
        <taxon>Thermobifida</taxon>
    </lineage>
</organism>
<reference key="1">
    <citation type="journal article" date="2007" name="J. Bacteriol.">
        <title>Genome sequence and analysis of the soil cellulolytic actinomycete Thermobifida fusca YX.</title>
        <authorList>
            <person name="Lykidis A."/>
            <person name="Mavromatis K."/>
            <person name="Ivanova N."/>
            <person name="Anderson I."/>
            <person name="Land M."/>
            <person name="DiBartolo G."/>
            <person name="Martinez M."/>
            <person name="Lapidus A."/>
            <person name="Lucas S."/>
            <person name="Copeland A."/>
            <person name="Richardson P."/>
            <person name="Wilson D.B."/>
            <person name="Kyrpides N."/>
        </authorList>
    </citation>
    <scope>NUCLEOTIDE SEQUENCE [LARGE SCALE GENOMIC DNA]</scope>
    <source>
        <strain>YX</strain>
    </source>
</reference>
<sequence length="498" mass="52269">MTELLKLSAAELGAAIASGETSAVEATQAYLDRIAEVDGQIHAFLHVAADKALEQARAVDARRAAGEKLGPLAGVPVAHKDVFTTKDMPTTAASKILEGWQSPYDATVTERLRDAGLVILGKTNLDEFAMGSSTENSAYGPTRNPWDTDRVPGGSSGGSSAAVAAFEAPLATGTDTGGSIRQPAAVCGLVGAKPTYGTSSRYGLIAFASSLDTPGPIARNVLDAALLHEAFSGHDPRDSTSVNEPVPPVVEAARRADVSGMRIGVVKELSGEGYQPGVMQRFTEAVELFESLGAKIVEVSCPSFTAALAAYYLIAPSECSSNLARFDAMRYGLRVGDDGTRSADEVMALTRAQGFGPEVKRRIILGTYALSSGYYDAYYGSAQKVRTLIKRDFEAAFQQADVLVSPTTPTTAFRLGERIDDPMAMYLADLCTIPTNLAGNAALSVPCGLAPEDNMPVGLHIMAPTLADDRAYQAGAAVEAALRDKWGGDLLSQCAYAV</sequence>